<gene>
    <name evidence="1" type="primary">plsY</name>
    <name type="ordered locus">BP1718</name>
</gene>
<feature type="chain" id="PRO_0000188335" description="Glycerol-3-phosphate acyltransferase">
    <location>
        <begin position="1"/>
        <end position="215"/>
    </location>
</feature>
<feature type="transmembrane region" description="Helical" evidence="1">
    <location>
        <begin position="14"/>
        <end position="34"/>
    </location>
</feature>
<feature type="transmembrane region" description="Helical" evidence="1">
    <location>
        <begin position="63"/>
        <end position="83"/>
    </location>
</feature>
<feature type="transmembrane region" description="Helical" evidence="1">
    <location>
        <begin position="92"/>
        <end position="112"/>
    </location>
</feature>
<feature type="transmembrane region" description="Helical" evidence="1">
    <location>
        <begin position="128"/>
        <end position="148"/>
    </location>
</feature>
<feature type="transmembrane region" description="Helical" evidence="1">
    <location>
        <begin position="154"/>
        <end position="174"/>
    </location>
</feature>
<reference key="1">
    <citation type="journal article" date="2003" name="Nat. Genet.">
        <title>Comparative analysis of the genome sequences of Bordetella pertussis, Bordetella parapertussis and Bordetella bronchiseptica.</title>
        <authorList>
            <person name="Parkhill J."/>
            <person name="Sebaihia M."/>
            <person name="Preston A."/>
            <person name="Murphy L.D."/>
            <person name="Thomson N.R."/>
            <person name="Harris D.E."/>
            <person name="Holden M.T.G."/>
            <person name="Churcher C.M."/>
            <person name="Bentley S.D."/>
            <person name="Mungall K.L."/>
            <person name="Cerdeno-Tarraga A.-M."/>
            <person name="Temple L."/>
            <person name="James K.D."/>
            <person name="Harris B."/>
            <person name="Quail M.A."/>
            <person name="Achtman M."/>
            <person name="Atkin R."/>
            <person name="Baker S."/>
            <person name="Basham D."/>
            <person name="Bason N."/>
            <person name="Cherevach I."/>
            <person name="Chillingworth T."/>
            <person name="Collins M."/>
            <person name="Cronin A."/>
            <person name="Davis P."/>
            <person name="Doggett J."/>
            <person name="Feltwell T."/>
            <person name="Goble A."/>
            <person name="Hamlin N."/>
            <person name="Hauser H."/>
            <person name="Holroyd S."/>
            <person name="Jagels K."/>
            <person name="Leather S."/>
            <person name="Moule S."/>
            <person name="Norberczak H."/>
            <person name="O'Neil S."/>
            <person name="Ormond D."/>
            <person name="Price C."/>
            <person name="Rabbinowitsch E."/>
            <person name="Rutter S."/>
            <person name="Sanders M."/>
            <person name="Saunders D."/>
            <person name="Seeger K."/>
            <person name="Sharp S."/>
            <person name="Simmonds M."/>
            <person name="Skelton J."/>
            <person name="Squares R."/>
            <person name="Squares S."/>
            <person name="Stevens K."/>
            <person name="Unwin L."/>
            <person name="Whitehead S."/>
            <person name="Barrell B.G."/>
            <person name="Maskell D.J."/>
        </authorList>
    </citation>
    <scope>NUCLEOTIDE SEQUENCE [LARGE SCALE GENOMIC DNA]</scope>
    <source>
        <strain>Tohama I / ATCC BAA-589 / NCTC 13251</strain>
    </source>
</reference>
<organism>
    <name type="scientific">Bordetella pertussis (strain Tohama I / ATCC BAA-589 / NCTC 13251)</name>
    <dbReference type="NCBI Taxonomy" id="257313"/>
    <lineage>
        <taxon>Bacteria</taxon>
        <taxon>Pseudomonadati</taxon>
        <taxon>Pseudomonadota</taxon>
        <taxon>Betaproteobacteria</taxon>
        <taxon>Burkholderiales</taxon>
        <taxon>Alcaligenaceae</taxon>
        <taxon>Bordetella</taxon>
    </lineage>
</organism>
<proteinExistence type="inferred from homology"/>
<evidence type="ECO:0000255" key="1">
    <source>
        <dbReference type="HAMAP-Rule" id="MF_01043"/>
    </source>
</evidence>
<dbReference type="EC" id="2.3.1.275" evidence="1"/>
<dbReference type="EMBL" id="BX640416">
    <property type="protein sequence ID" value="CAE42005.1"/>
    <property type="molecule type" value="Genomic_DNA"/>
</dbReference>
<dbReference type="RefSeq" id="NP_880433.1">
    <property type="nucleotide sequence ID" value="NC_002929.2"/>
</dbReference>
<dbReference type="RefSeq" id="WP_003811015.1">
    <property type="nucleotide sequence ID" value="NZ_CP039022.1"/>
</dbReference>
<dbReference type="SMR" id="Q7VXN3"/>
<dbReference type="STRING" id="257313.BP1718"/>
<dbReference type="PaxDb" id="257313-BP1718"/>
<dbReference type="GeneID" id="93204840"/>
<dbReference type="KEGG" id="bpe:BP1718"/>
<dbReference type="PATRIC" id="fig|257313.5.peg.1843"/>
<dbReference type="eggNOG" id="COG0344">
    <property type="taxonomic scope" value="Bacteria"/>
</dbReference>
<dbReference type="HOGENOM" id="CLU_081254_0_0_4"/>
<dbReference type="UniPathway" id="UPA00085"/>
<dbReference type="Proteomes" id="UP000002676">
    <property type="component" value="Chromosome"/>
</dbReference>
<dbReference type="GO" id="GO:0005886">
    <property type="term" value="C:plasma membrane"/>
    <property type="evidence" value="ECO:0007669"/>
    <property type="project" value="UniProtKB-SubCell"/>
</dbReference>
<dbReference type="GO" id="GO:0043772">
    <property type="term" value="F:acyl-phosphate glycerol-3-phosphate acyltransferase activity"/>
    <property type="evidence" value="ECO:0007669"/>
    <property type="project" value="UniProtKB-UniRule"/>
</dbReference>
<dbReference type="GO" id="GO:0008654">
    <property type="term" value="P:phospholipid biosynthetic process"/>
    <property type="evidence" value="ECO:0007669"/>
    <property type="project" value="UniProtKB-UniRule"/>
</dbReference>
<dbReference type="HAMAP" id="MF_01043">
    <property type="entry name" value="PlsY"/>
    <property type="match status" value="1"/>
</dbReference>
<dbReference type="InterPro" id="IPR003811">
    <property type="entry name" value="G3P_acylTferase_PlsY"/>
</dbReference>
<dbReference type="NCBIfam" id="TIGR00023">
    <property type="entry name" value="glycerol-3-phosphate 1-O-acyltransferase PlsY"/>
    <property type="match status" value="1"/>
</dbReference>
<dbReference type="PANTHER" id="PTHR30309:SF0">
    <property type="entry name" value="GLYCEROL-3-PHOSPHATE ACYLTRANSFERASE-RELATED"/>
    <property type="match status" value="1"/>
</dbReference>
<dbReference type="PANTHER" id="PTHR30309">
    <property type="entry name" value="INNER MEMBRANE PROTEIN YGIH"/>
    <property type="match status" value="1"/>
</dbReference>
<dbReference type="Pfam" id="PF02660">
    <property type="entry name" value="G3P_acyltransf"/>
    <property type="match status" value="1"/>
</dbReference>
<dbReference type="SMART" id="SM01207">
    <property type="entry name" value="G3P_acyltransf"/>
    <property type="match status" value="1"/>
</dbReference>
<protein>
    <recommendedName>
        <fullName evidence="1">Glycerol-3-phosphate acyltransferase</fullName>
    </recommendedName>
    <alternativeName>
        <fullName evidence="1">Acyl-PO4 G3P acyltransferase</fullName>
    </alternativeName>
    <alternativeName>
        <fullName evidence="1">Acyl-phosphate--glycerol-3-phosphate acyltransferase</fullName>
    </alternativeName>
    <alternativeName>
        <fullName evidence="1">G3P acyltransferase</fullName>
        <shortName evidence="1">GPAT</shortName>
        <ecNumber evidence="1">2.3.1.275</ecNumber>
    </alternativeName>
    <alternativeName>
        <fullName evidence="1">Lysophosphatidic acid synthase</fullName>
        <shortName evidence="1">LPA synthase</shortName>
    </alternativeName>
</protein>
<name>PLSY_BORPE</name>
<accession>Q7VXN3</accession>
<sequence>MPATMVLTAPSLLSSSALIVLAYLIGSIPFAVVVSKLMGLQDPRSYGSGNPGATNVLRTGNKTAAALTLLGDAAKGWFALWLARALVPELSWGAYALVALAVFLGHLYPLFLRFKGGKGVATALGVLMAIEPWLAVATIATWLIVAVFSRYSSLAALVAAFFAPVYYVFGSGAAWHARLEVGLAIAVISALLFYRHRANIARLLKGTESRIGKKK</sequence>
<keyword id="KW-0997">Cell inner membrane</keyword>
<keyword id="KW-1003">Cell membrane</keyword>
<keyword id="KW-0444">Lipid biosynthesis</keyword>
<keyword id="KW-0443">Lipid metabolism</keyword>
<keyword id="KW-0472">Membrane</keyword>
<keyword id="KW-0594">Phospholipid biosynthesis</keyword>
<keyword id="KW-1208">Phospholipid metabolism</keyword>
<keyword id="KW-1185">Reference proteome</keyword>
<keyword id="KW-0808">Transferase</keyword>
<keyword id="KW-0812">Transmembrane</keyword>
<keyword id="KW-1133">Transmembrane helix</keyword>
<comment type="function">
    <text evidence="1">Catalyzes the transfer of an acyl group from acyl-phosphate (acyl-PO(4)) to glycerol-3-phosphate (G3P) to form lysophosphatidic acid (LPA). This enzyme utilizes acyl-phosphate as fatty acyl donor, but not acyl-CoA or acyl-ACP.</text>
</comment>
<comment type="catalytic activity">
    <reaction evidence="1">
        <text>an acyl phosphate + sn-glycerol 3-phosphate = a 1-acyl-sn-glycero-3-phosphate + phosphate</text>
        <dbReference type="Rhea" id="RHEA:34075"/>
        <dbReference type="ChEBI" id="CHEBI:43474"/>
        <dbReference type="ChEBI" id="CHEBI:57597"/>
        <dbReference type="ChEBI" id="CHEBI:57970"/>
        <dbReference type="ChEBI" id="CHEBI:59918"/>
        <dbReference type="EC" id="2.3.1.275"/>
    </reaction>
</comment>
<comment type="pathway">
    <text evidence="1">Lipid metabolism; phospholipid metabolism.</text>
</comment>
<comment type="subunit">
    <text evidence="1">Probably interacts with PlsX.</text>
</comment>
<comment type="subcellular location">
    <subcellularLocation>
        <location evidence="1">Cell inner membrane</location>
        <topology evidence="1">Multi-pass membrane protein</topology>
    </subcellularLocation>
</comment>
<comment type="similarity">
    <text evidence="1">Belongs to the PlsY family.</text>
</comment>